<dbReference type="EC" id="2.7.1.237" evidence="1"/>
<dbReference type="EMBL" id="AM180088">
    <property type="protein sequence ID" value="CAJ51467.1"/>
    <property type="molecule type" value="Genomic_DNA"/>
</dbReference>
<dbReference type="RefSeq" id="WP_011570624.1">
    <property type="nucleotide sequence ID" value="NC_008212.1"/>
</dbReference>
<dbReference type="SMR" id="Q18KI2"/>
<dbReference type="STRING" id="362976.HQ_1339A"/>
<dbReference type="GeneID" id="4192259"/>
<dbReference type="KEGG" id="hwa:HQ_1339A"/>
<dbReference type="eggNOG" id="arCOG04076">
    <property type="taxonomic scope" value="Archaea"/>
</dbReference>
<dbReference type="HOGENOM" id="CLU_120795_0_0_2"/>
<dbReference type="UniPathway" id="UPA00241"/>
<dbReference type="Proteomes" id="UP000001975">
    <property type="component" value="Chromosome"/>
</dbReference>
<dbReference type="GO" id="GO:0005525">
    <property type="term" value="F:GTP binding"/>
    <property type="evidence" value="ECO:0007669"/>
    <property type="project" value="UniProtKB-UniRule"/>
</dbReference>
<dbReference type="GO" id="GO:0016301">
    <property type="term" value="F:kinase activity"/>
    <property type="evidence" value="ECO:0007669"/>
    <property type="project" value="UniProtKB-UniRule"/>
</dbReference>
<dbReference type="GO" id="GO:0015937">
    <property type="term" value="P:coenzyme A biosynthetic process"/>
    <property type="evidence" value="ECO:0007669"/>
    <property type="project" value="UniProtKB-UniRule"/>
</dbReference>
<dbReference type="HAMAP" id="MF_00590">
    <property type="entry name" value="Dephospho_CoA_kinase_GTP_dep"/>
    <property type="match status" value="1"/>
</dbReference>
<dbReference type="InterPro" id="IPR007164">
    <property type="entry name" value="GTP-dep_dephospho-CoA_kin"/>
</dbReference>
<dbReference type="PANTHER" id="PTHR40732:SF1">
    <property type="entry name" value="GTP-DEPENDENT DEPHOSPHO-COA KINASE"/>
    <property type="match status" value="1"/>
</dbReference>
<dbReference type="PANTHER" id="PTHR40732">
    <property type="entry name" value="UPF0218 PROTEIN TK1697"/>
    <property type="match status" value="1"/>
</dbReference>
<dbReference type="Pfam" id="PF04019">
    <property type="entry name" value="DUF359"/>
    <property type="match status" value="1"/>
</dbReference>
<dbReference type="PIRSF" id="PIRSF006533">
    <property type="entry name" value="UCP006533"/>
    <property type="match status" value="1"/>
</dbReference>
<keyword id="KW-0173">Coenzyme A biosynthesis</keyword>
<keyword id="KW-0342">GTP-binding</keyword>
<keyword id="KW-0418">Kinase</keyword>
<keyword id="KW-0547">Nucleotide-binding</keyword>
<keyword id="KW-1185">Reference proteome</keyword>
<keyword id="KW-0808">Transferase</keyword>
<comment type="function">
    <text evidence="1">Catalyzes the GTP-dependent phosphorylation of the 3'-hydroxyl group of dephosphocoenzyme A to form coenzyme A (CoA).</text>
</comment>
<comment type="catalytic activity">
    <reaction evidence="1">
        <text>3'-dephospho-CoA + GTP = GDP + CoA + H(+)</text>
        <dbReference type="Rhea" id="RHEA:61156"/>
        <dbReference type="ChEBI" id="CHEBI:15378"/>
        <dbReference type="ChEBI" id="CHEBI:37565"/>
        <dbReference type="ChEBI" id="CHEBI:57287"/>
        <dbReference type="ChEBI" id="CHEBI:57328"/>
        <dbReference type="ChEBI" id="CHEBI:58189"/>
        <dbReference type="EC" id="2.7.1.237"/>
    </reaction>
</comment>
<comment type="pathway">
    <text evidence="1">Cofactor biosynthesis; coenzyme A biosynthesis.</text>
</comment>
<comment type="similarity">
    <text evidence="1">Belongs to the GTP-dependent DPCK family.</text>
</comment>
<name>DPCKG_HALWD</name>
<sequence>MDRLPLELPSSLRQEFKSPFGPVYTDVTQFLTDAGRPIIAVGDIVTYHLQTVDYTPAVAVIDGQTKRESVDETVKAALSKHNKRIDVENQPGTISIALLEALQTAVETPESVMIVVDGEEDLATLPAVLVARPGGTVVYGQPDQGMVRIAVTPETKITMSRLLKRMDGDAAAAFDRLGVDRSGDKK</sequence>
<protein>
    <recommendedName>
        <fullName evidence="1">GTP-dependent dephospho-CoA kinase</fullName>
        <ecNumber evidence="1">2.7.1.237</ecNumber>
    </recommendedName>
    <alternativeName>
        <fullName evidence="1">Dephospho-coenzyme A kinase</fullName>
        <shortName evidence="1">DPCK</shortName>
    </alternativeName>
</protein>
<feature type="chain" id="PRO_0000380049" description="GTP-dependent dephospho-CoA kinase">
    <location>
        <begin position="1"/>
        <end position="186"/>
    </location>
</feature>
<feature type="binding site" evidence="1">
    <location>
        <position position="43"/>
    </location>
    <ligand>
        <name>GTP</name>
        <dbReference type="ChEBI" id="CHEBI:37565"/>
    </ligand>
</feature>
<feature type="binding site" evidence="1">
    <location>
        <position position="44"/>
    </location>
    <ligand>
        <name>GTP</name>
        <dbReference type="ChEBI" id="CHEBI:37565"/>
    </ligand>
</feature>
<feature type="binding site" evidence="1">
    <location>
        <position position="45"/>
    </location>
    <ligand>
        <name>GTP</name>
        <dbReference type="ChEBI" id="CHEBI:37565"/>
    </ligand>
</feature>
<feature type="binding site" evidence="1">
    <location>
        <position position="62"/>
    </location>
    <ligand>
        <name>GTP</name>
        <dbReference type="ChEBI" id="CHEBI:37565"/>
    </ligand>
</feature>
<feature type="binding site" evidence="1">
    <location>
        <position position="120"/>
    </location>
    <ligand>
        <name>GTP</name>
        <dbReference type="ChEBI" id="CHEBI:37565"/>
    </ligand>
</feature>
<feature type="binding site" evidence="1">
    <location>
        <position position="143"/>
    </location>
    <ligand>
        <name>GTP</name>
        <dbReference type="ChEBI" id="CHEBI:37565"/>
    </ligand>
</feature>
<proteinExistence type="inferred from homology"/>
<evidence type="ECO:0000255" key="1">
    <source>
        <dbReference type="HAMAP-Rule" id="MF_00590"/>
    </source>
</evidence>
<reference key="1">
    <citation type="journal article" date="2006" name="BMC Genomics">
        <title>The genome of the square archaeon Haloquadratum walsbyi: life at the limits of water activity.</title>
        <authorList>
            <person name="Bolhuis H."/>
            <person name="Palm P."/>
            <person name="Wende A."/>
            <person name="Falb M."/>
            <person name="Rampp M."/>
            <person name="Rodriguez-Valera F."/>
            <person name="Pfeiffer F."/>
            <person name="Oesterhelt D."/>
        </authorList>
    </citation>
    <scope>NUCLEOTIDE SEQUENCE [LARGE SCALE GENOMIC DNA]</scope>
    <source>
        <strain>DSM 16790 / HBSQ001</strain>
    </source>
</reference>
<gene>
    <name type="ordered locus">HQ_1339A</name>
</gene>
<accession>Q18KI2</accession>
<organism>
    <name type="scientific">Haloquadratum walsbyi (strain DSM 16790 / HBSQ001)</name>
    <dbReference type="NCBI Taxonomy" id="362976"/>
    <lineage>
        <taxon>Archaea</taxon>
        <taxon>Methanobacteriati</taxon>
        <taxon>Methanobacteriota</taxon>
        <taxon>Stenosarchaea group</taxon>
        <taxon>Halobacteria</taxon>
        <taxon>Halobacteriales</taxon>
        <taxon>Haloferacaceae</taxon>
        <taxon>Haloquadratum</taxon>
    </lineage>
</organism>